<protein>
    <recommendedName>
        <fullName evidence="10">Enolase</fullName>
        <shortName evidence="10">PfEN</shortName>
        <ecNumber evidence="6">4.2.1.11</ecNumber>
    </recommendedName>
</protein>
<evidence type="ECO:0000250" key="1">
    <source>
        <dbReference type="UniProtKB" id="P06733"/>
    </source>
</evidence>
<evidence type="ECO:0000250" key="2">
    <source>
        <dbReference type="UniProtKB" id="Q7RA60"/>
    </source>
</evidence>
<evidence type="ECO:0000250" key="3">
    <source>
        <dbReference type="UniProtKB" id="Q8IJN7"/>
    </source>
</evidence>
<evidence type="ECO:0000255" key="4">
    <source>
        <dbReference type="PIRSR" id="PIRSR001400-1"/>
    </source>
</evidence>
<evidence type="ECO:0000255" key="5">
    <source>
        <dbReference type="PIRSR" id="PIRSR001400-2"/>
    </source>
</evidence>
<evidence type="ECO:0000269" key="6">
    <source>
    </source>
</evidence>
<evidence type="ECO:0000269" key="7">
    <source>
    </source>
</evidence>
<evidence type="ECO:0000269" key="8">
    <source>
    </source>
</evidence>
<evidence type="ECO:0000269" key="9">
    <source>
    </source>
</evidence>
<evidence type="ECO:0000303" key="10">
    <source>
    </source>
</evidence>
<evidence type="ECO:0000305" key="11"/>
<evidence type="ECO:0000305" key="12">
    <source>
    </source>
</evidence>
<evidence type="ECO:0000312" key="13">
    <source>
        <dbReference type="EMBL" id="EWC85828.1"/>
    </source>
</evidence>
<evidence type="ECO:0000312" key="14">
    <source>
        <dbReference type="EMBL" id="PKC43580.1"/>
    </source>
</evidence>
<evidence type="ECO:0000312" key="15">
    <source>
        <dbReference type="Proteomes" id="UP000030673"/>
    </source>
</evidence>
<proteinExistence type="evidence at protein level"/>
<comment type="function">
    <text evidence="6 8">Glycolytic enzyme that catalyzes the conversion of 2-phosphoglycerate to phosphoenolpyruvate (PubMed:15606772). In addition to glycolysis, involved in various processes such as parasite development and invasion (PubMed:21949403). Plays an essential role during ookinete invasion of the mosquito vector midgut by mediating the interaction of the ookinete with the midgut epithelium and, further, by binding to mammalian host plasminogen in the blood meal, whose conversion to active plasmin promotes the invasion process (PubMed:21949403).</text>
</comment>
<comment type="catalytic activity">
    <reaction evidence="6">
        <text>(2R)-2-phosphoglycerate = phosphoenolpyruvate + H2O</text>
        <dbReference type="Rhea" id="RHEA:10164"/>
        <dbReference type="ChEBI" id="CHEBI:15377"/>
        <dbReference type="ChEBI" id="CHEBI:58289"/>
        <dbReference type="ChEBI" id="CHEBI:58702"/>
        <dbReference type="EC" id="4.2.1.11"/>
    </reaction>
    <physiologicalReaction direction="left-to-right" evidence="6">
        <dbReference type="Rhea" id="RHEA:10165"/>
    </physiologicalReaction>
    <physiologicalReaction direction="right-to-left" evidence="6">
        <dbReference type="Rhea" id="RHEA:10166"/>
    </physiologicalReaction>
</comment>
<comment type="cofactor">
    <cofactor evidence="6">
        <name>Mg(2+)</name>
        <dbReference type="ChEBI" id="CHEBI:18420"/>
    </cofactor>
    <text evidence="3 6">Binds 2 Mg(2+) ions per subunit (By similarity). Mg(2+) is required for catalysis and for stabilizing the dimer (By similarity). Unlike for mammalian and yeast enolases, Mg(2+) is dispensable to form an active closed conformation (By similarity). Inhibited by high levels of Mg(2+) (PubMed:15606772).</text>
</comment>
<comment type="activity regulation">
    <text evidence="6">Inhibited by Na(+).</text>
</comment>
<comment type="biophysicochemical properties">
    <kinetics>
        <KM evidence="6">0.041 mM for 2-phosphoglyceric acid (at 20 degrees Celsius and pH 7.4)</KM>
        <KM evidence="6">0.25 mM for phosphoenolpyruvate (at 20 degrees Celsius and pH 7.4)</KM>
    </kinetics>
    <phDependence>
        <text evidence="6">Optimum pH is 7.4-7.6.</text>
    </phDependence>
</comment>
<comment type="pathway">
    <text evidence="12">Carbohydrate degradation; glycolysis; pyruvate from D-glyceraldehyde 3-phosphate: step 4/5.</text>
</comment>
<comment type="subunit">
    <text evidence="3 6 8 9">Homodimer (PubMed:15606772). Forms a complex at least composed of DegP, ENO and HSP70 (By similarity). Interacts with G-actin (By similarity). Interacts (via the DKSLVK motif) with mammalian host PLG/plasminogen (present in the mosquito blood meal); the interaction occurs at the ookinete cell surface and is required for ookinete invasion of the mosquito midgut (PubMed:21949403). Interacts with A.gambiae EBP; depending on the Plasmodium species, the interaction is either involved in ookinete invasion of the mosquito midgut (P.berghei) or is dispensable (P.falciparum) (PubMed:24474798).</text>
</comment>
<comment type="subcellular location">
    <subcellularLocation>
        <location evidence="7">Cytoplasm</location>
    </subcellularLocation>
    <subcellularLocation>
        <location evidence="3">Nucleus</location>
    </subcellularLocation>
    <subcellularLocation>
        <location evidence="7">Cytoplasm</location>
        <location evidence="7">Cytoskeleton</location>
    </subcellularLocation>
    <subcellularLocation>
        <location evidence="8">Cell surface</location>
    </subcellularLocation>
    <subcellularLocation>
        <location evidence="2">Cell membrane</location>
        <topology evidence="11">Peripheral membrane protein</topology>
        <orientation evidence="2">Cytoplasmic side</orientation>
    </subcellularLocation>
    <subcellularLocation>
        <location evidence="3">Vacuole</location>
    </subcellularLocation>
    <text evidence="2 3 7 8">Partially localizes to the nucleus in rings and trophozoites. Localization to the nucleus and food vacuole is higher in early and mid-stage trophozoites compared to the late-stage trophozoites and schizonts (By similarity). In the nucleus, localizes to heterochromatin region (By similarity). In rings, nuclear localization is dependent on the actin cytoskeleton (By similarity). Localizes to the cell surface of merozoites (By similarity). In gametocytes, predominantly localizes to the actin cytoskeleton (PubMed:19642995). In the trophozoite food vacuole, colocalizes with hemozoin, a product of heme detoxification (By similarity). In sporozoites, localizes to punctate structures beneath the cell membrane (By similarity). Localizes to the cell surface of ookinetes, especially on the apical pellicle complex that is involved in invasion (PubMed:21949403). When phosphorylated at Thr-339, localizes to the cytoskeleton (By similarity). When phosphorylated at Ser-42, localizes to the cytoplasm (By similarity). When ubiquitinated at Lys-138, acetylated at Lys-133 and Lys-375 and phosphorylated at Tyr-139, localizes to the food vacuole (By similarity). When triubiquitinated at Lys-138, appears to colocalize with hemozoin in the food vacuole (By similarity).</text>
</comment>
<comment type="developmental stage">
    <text evidence="7 8">Expressed in gametocytes and gametes (at protein level); expression in stage II gametocytes is lower compared to stages IV/V gametocytes (PubMed:19642995). Expressed in ookinetes (at protein level) (PubMed:21949403).</text>
</comment>
<comment type="domain">
    <text evidence="3">The pentapeptide insert motif is required for the stabilization of the apo-enzyme in an active closed conformation, independently of Mg(2+) binding. The motif is also required for homodimerization. This motif is only present in Apicomplexa and plant enolases.</text>
</comment>
<comment type="domain">
    <text evidence="8">The DKSLVK motif binds to the lysine-binding Kringle domains of plasminogen from various mammalian species (PubMed:21949403). This motif is present only in enolases of plant and several microbial pathogens including Plasmodium species (PubMed:21949403).</text>
</comment>
<comment type="biotechnology">
    <text evidence="8 9">The salivary gland and midgut peptide SM1 (PCQRAIFQSICK) is an artificial dodecapeptide that mimics enolase DKSLVK motif. By binding the EBP receptor on the luminal surface of the female mosquito midgut epithelium, SM1 inhibits ookinete invasion of P.berghei and thus, could potentially be used to prevent parasite transmission by the mosquito vector (PubMed:21949403, PubMed:24474798). Similarly, another artificial peptide, MP2 (ACYIKTLHPPCS), also inhibits ookinete invasion of P.berghei and P.falciparum and could potentially be used to prevent parasite transmission by the mosquito vector (PubMed:24474798).</text>
</comment>
<comment type="similarity">
    <text evidence="11">Belongs to the enolase family.</text>
</comment>
<sequence>MAHVITRINAREILDSRGNPTVEVDLETNLGIFRAAVPSGASTGIYEALELRDNDKSRYLGKGVQKAIKNINEIIAPKLIGMNCTEQKKIDNLMVEELDGSKNEWGWSKSKLGANAILAISMAVCRAGAAANKVSLYKYLAQLAGKKSDQMVLPVPCLNVINGGSHAGNKLSFQEFMIVPVGAPSFKEALRYGAEVYHTLKSEIKKKYGIDATNVGDEGGFAPNILNANEALDLLVTAIKSAGYEGKVKIAMDVAASEFYNSENKTYDLDFKTPNNDKSLVKTGAQLVDLYIDLVKKYPIVSIEDPFDQDDWENYAKLTAAIGKDVQIVGDDLLVTNPTRITKALEKNACNALLLKVNQIGSITEAIEACLLSQKNNWGVMVSHRSGETEDVFIADLVVALRTGQIKTGAPCRSERNAKYNQLLRIEESLGNNAVFAGEKFRLQLN</sequence>
<name>ENO_PLAFO</name>
<feature type="chain" id="PRO_0000456086" description="Enolase">
    <location>
        <begin position="1"/>
        <end position="446"/>
    </location>
</feature>
<feature type="short sequence motif" description="Pentapeptide insert" evidence="3">
    <location>
        <begin position="104"/>
        <end position="108"/>
    </location>
</feature>
<feature type="short sequence motif" description="DKSLVK motif" evidence="8">
    <location>
        <begin position="277"/>
        <end position="282"/>
    </location>
</feature>
<feature type="active site" description="Proton donor" evidence="4">
    <location>
        <position position="218"/>
    </location>
</feature>
<feature type="active site" description="Proton acceptor" evidence="4">
    <location>
        <position position="356"/>
    </location>
</feature>
<feature type="binding site" evidence="1">
    <location>
        <position position="42"/>
    </location>
    <ligand>
        <name>Mg(2+)</name>
        <dbReference type="ChEBI" id="CHEBI:18420"/>
        <label>1</label>
    </ligand>
</feature>
<feature type="binding site" evidence="5">
    <location>
        <position position="166"/>
    </location>
    <ligand>
        <name>substrate</name>
    </ligand>
</feature>
<feature type="binding site" evidence="5">
    <location>
        <position position="175"/>
    </location>
    <ligand>
        <name>substrate</name>
    </ligand>
</feature>
<feature type="binding site" evidence="1">
    <location>
        <position position="253"/>
    </location>
    <ligand>
        <name>Mg(2+)</name>
        <dbReference type="ChEBI" id="CHEBI:18420"/>
        <label>2</label>
    </ligand>
</feature>
<feature type="binding site" evidence="1">
    <location>
        <position position="304"/>
    </location>
    <ligand>
        <name>Mg(2+)</name>
        <dbReference type="ChEBI" id="CHEBI:18420"/>
        <label>2</label>
    </ligand>
</feature>
<feature type="binding site" evidence="5">
    <location>
        <position position="304"/>
    </location>
    <ligand>
        <name>substrate</name>
    </ligand>
</feature>
<feature type="binding site" evidence="1">
    <location>
        <position position="331"/>
    </location>
    <ligand>
        <name>Mg(2+)</name>
        <dbReference type="ChEBI" id="CHEBI:18420"/>
        <label>2</label>
    </ligand>
</feature>
<feature type="binding site" evidence="5">
    <location>
        <position position="331"/>
    </location>
    <ligand>
        <name>substrate</name>
    </ligand>
</feature>
<feature type="binding site" evidence="1">
    <location>
        <begin position="383"/>
        <end position="386"/>
    </location>
    <ligand>
        <name>substrate</name>
    </ligand>
</feature>
<feature type="binding site" evidence="5">
    <location>
        <position position="407"/>
    </location>
    <ligand>
        <name>substrate</name>
    </ligand>
</feature>
<feature type="modified residue" description="Phosphoserine" evidence="3">
    <location>
        <position position="42"/>
    </location>
</feature>
<feature type="modified residue" description="N6-acetyllysine" evidence="2">
    <location>
        <position position="133"/>
    </location>
</feature>
<feature type="modified residue" description="Phosphotyrosine" evidence="2">
    <location>
        <position position="139"/>
    </location>
</feature>
<feature type="modified residue" description="Phosphothreonine" evidence="2">
    <location>
        <position position="339"/>
    </location>
</feature>
<feature type="modified residue" description="N6-acetyllysine" evidence="2">
    <location>
        <position position="375"/>
    </location>
</feature>
<feature type="cross-link" description="Glycyl lysine isopeptide (Lys-Gly) (interchain with G-Cter in ubiquitin)" evidence="2">
    <location>
        <position position="138"/>
    </location>
</feature>
<reference evidence="15" key="1">
    <citation type="submission" date="2013-02" db="EMBL/GenBank/DDBJ databases">
        <title>The Genome Sequence of Plasmodium falciparum NF54.</title>
        <authorList>
            <consortium name="The Broad Institute Genome Sequencing Platform"/>
            <consortium name="The Broad Institute Genome Sequencing Center for Infectious Disease"/>
            <person name="Neafsey D."/>
            <person name="Cheeseman I."/>
            <person name="Volkman S."/>
            <person name="Adams J."/>
            <person name="Walker B."/>
            <person name="Young S.K."/>
            <person name="Zeng Q."/>
            <person name="Gargeya S."/>
            <person name="Fitzgerald M."/>
            <person name="Haas B."/>
            <person name="Abouelleil A."/>
            <person name="Alvarado L."/>
            <person name="Arachchi H.M."/>
            <person name="Berlin A.M."/>
            <person name="Chapman S.B."/>
            <person name="Dewar J."/>
            <person name="Goldberg J."/>
            <person name="Griggs A."/>
            <person name="Gujja S."/>
            <person name="Hansen M."/>
            <person name="Howarth C."/>
            <person name="Imamovic A."/>
            <person name="Larimer J."/>
            <person name="McCowan C."/>
            <person name="Murphy C."/>
            <person name="Neiman D."/>
            <person name="Pearson M."/>
            <person name="Priest M."/>
            <person name="Roberts A."/>
            <person name="Saif S."/>
            <person name="Shea T."/>
            <person name="Sisk P."/>
            <person name="Sykes S."/>
            <person name="Wortman J."/>
            <person name="Nusbaum C."/>
            <person name="Birren B."/>
        </authorList>
    </citation>
    <scope>NUCLEOTIDE SEQUENCE [LARGE SCALE GENOMIC DNA]</scope>
    <source>
        <strain evidence="15">NF54</strain>
    </source>
</reference>
<reference evidence="14" key="2">
    <citation type="submission" date="2017-11" db="EMBL/GenBank/DDBJ databases">
        <title>Plasmodium falciparum NF54 genome assembly.</title>
        <authorList>
            <person name="Bryant J.M."/>
            <person name="Baumgarten S."/>
            <person name="Scheidig-Benatar C."/>
            <person name="Scherf A."/>
        </authorList>
    </citation>
    <scope>NUCLEOTIDE SEQUENCE [LARGE SCALE GENOMIC DNA]</scope>
    <source>
        <strain evidence="14">NF54</strain>
    </source>
</reference>
<reference evidence="11" key="3">
    <citation type="journal article" date="2004" name="Eur. J. Biochem.">
        <title>Cloning, over-expression, purification and characterization of Plasmodium falciparum enolase.</title>
        <authorList>
            <person name="Pal-Bhowmick I."/>
            <person name="Sadagopan K."/>
            <person name="Vora H.K."/>
            <person name="Sehgal A."/>
            <person name="Sharma S."/>
            <person name="Jarori G.K."/>
        </authorList>
    </citation>
    <scope>FUNCTION</scope>
    <scope>CATALYTIC ACTIVITY</scope>
    <scope>COFACTOR</scope>
    <scope>ACTIVITY REGULATION</scope>
    <scope>BIOPHYSICOCHEMICAL PROPERTIES</scope>
    <scope>PATHWAY</scope>
    <scope>SUBUNIT</scope>
</reference>
<reference evidence="11" key="4">
    <citation type="journal article" date="2009" name="Malar. J.">
        <title>Plasmodium falciparum enolase: stage-specific expression and sub-cellular localization.</title>
        <authorList>
            <person name="Bhowmick I.P."/>
            <person name="Kumar N."/>
            <person name="Sharma S."/>
            <person name="Coppens I."/>
            <person name="Jarori G.K."/>
        </authorList>
    </citation>
    <scope>SUBCELLULAR LOCATION</scope>
    <scope>DEVELOPMENTAL STAGE</scope>
</reference>
<reference evidence="11" key="5">
    <citation type="journal article" date="2011" name="Proc. Natl. Acad. Sci. U.S.A.">
        <title>Plasmodium ookinetes coopt mammalian plasminogen to invade the mosquito midgut.</title>
        <authorList>
            <person name="Ghosh A.K."/>
            <person name="Coppens I."/>
            <person name="Gaardsvoll H."/>
            <person name="Ploug M."/>
            <person name="Jacobs-Lorena M."/>
        </authorList>
    </citation>
    <scope>FUNCTION</scope>
    <scope>INTERACTION WITH HOST PLG</scope>
    <scope>SUBCELLULAR LOCATION</scope>
    <scope>MOTIF</scope>
    <scope>BIOTECHNOLOGY</scope>
    <scope>DEVELOPMENTAL STAGE</scope>
</reference>
<reference evidence="11" key="6">
    <citation type="journal article" date="2014" name="Proc. Natl. Acad. Sci. U.S.A.">
        <title>Multiple pathways for Plasmodium ookinete invasion of the mosquito midgut.</title>
        <authorList>
            <person name="Vega-Rodriguez J."/>
            <person name="Ghosh A.K."/>
            <person name="Kanzok S.M."/>
            <person name="Dinglasan R.R."/>
            <person name="Wang S."/>
            <person name="Bongio N.J."/>
            <person name="Kalume D.E."/>
            <person name="Miura K."/>
            <person name="Long C.A."/>
            <person name="Pandey A."/>
            <person name="Jacobs-Lorena M."/>
        </authorList>
    </citation>
    <scope>INTERACTION WITH A.GAMBIAE EBP</scope>
    <scope>BIOTECHNOLOGY</scope>
</reference>
<accession>W7JLR6</accession>
<dbReference type="EC" id="4.2.1.11" evidence="6"/>
<dbReference type="EMBL" id="KE123882">
    <property type="protein sequence ID" value="EWC85828.1"/>
    <property type="molecule type" value="Genomic_DNA"/>
</dbReference>
<dbReference type="EMBL" id="NYMT01000016">
    <property type="protein sequence ID" value="PKC43580.1"/>
    <property type="molecule type" value="Genomic_DNA"/>
</dbReference>
<dbReference type="SMR" id="W7JLR6"/>
<dbReference type="EnsemblProtists" id="EWC85828">
    <property type="protein sequence ID" value="EWC85828"/>
    <property type="gene ID" value="PFNF54_05495"/>
</dbReference>
<dbReference type="VEuPathDB" id="PlasmoDB:PfNF54_100021100"/>
<dbReference type="OMA" id="RCMMSHR"/>
<dbReference type="UniPathway" id="UPA00109">
    <property type="reaction ID" value="UER00187"/>
</dbReference>
<dbReference type="Proteomes" id="UP000030673">
    <property type="component" value="Unassembled WGS sequence"/>
</dbReference>
<dbReference type="Proteomes" id="UP000232684">
    <property type="component" value="Unassembled WGS sequence"/>
</dbReference>
<dbReference type="GO" id="GO:0009986">
    <property type="term" value="C:cell surface"/>
    <property type="evidence" value="ECO:0007669"/>
    <property type="project" value="UniProtKB-SubCell"/>
</dbReference>
<dbReference type="GO" id="GO:0005856">
    <property type="term" value="C:cytoskeleton"/>
    <property type="evidence" value="ECO:0007669"/>
    <property type="project" value="UniProtKB-SubCell"/>
</dbReference>
<dbReference type="GO" id="GO:0005634">
    <property type="term" value="C:nucleus"/>
    <property type="evidence" value="ECO:0007669"/>
    <property type="project" value="UniProtKB-SubCell"/>
</dbReference>
<dbReference type="GO" id="GO:0000015">
    <property type="term" value="C:phosphopyruvate hydratase complex"/>
    <property type="evidence" value="ECO:0007669"/>
    <property type="project" value="InterPro"/>
</dbReference>
<dbReference type="GO" id="GO:0005886">
    <property type="term" value="C:plasma membrane"/>
    <property type="evidence" value="ECO:0007669"/>
    <property type="project" value="UniProtKB-SubCell"/>
</dbReference>
<dbReference type="GO" id="GO:0005773">
    <property type="term" value="C:vacuole"/>
    <property type="evidence" value="ECO:0007669"/>
    <property type="project" value="UniProtKB-SubCell"/>
</dbReference>
<dbReference type="GO" id="GO:0000287">
    <property type="term" value="F:magnesium ion binding"/>
    <property type="evidence" value="ECO:0007669"/>
    <property type="project" value="InterPro"/>
</dbReference>
<dbReference type="GO" id="GO:0004634">
    <property type="term" value="F:phosphopyruvate hydratase activity"/>
    <property type="evidence" value="ECO:0000314"/>
    <property type="project" value="UniProtKB"/>
</dbReference>
<dbReference type="GO" id="GO:0042803">
    <property type="term" value="F:protein homodimerization activity"/>
    <property type="evidence" value="ECO:0000314"/>
    <property type="project" value="UniProtKB"/>
</dbReference>
<dbReference type="GO" id="GO:0006096">
    <property type="term" value="P:glycolytic process"/>
    <property type="evidence" value="ECO:0007669"/>
    <property type="project" value="UniProtKB-UniPathway"/>
</dbReference>
<dbReference type="CDD" id="cd03313">
    <property type="entry name" value="enolase"/>
    <property type="match status" value="1"/>
</dbReference>
<dbReference type="FunFam" id="3.30.390.10:FF:000001">
    <property type="entry name" value="Enolase"/>
    <property type="match status" value="1"/>
</dbReference>
<dbReference type="FunFam" id="3.20.20.120:FF:000002">
    <property type="entry name" value="Enolase 1"/>
    <property type="match status" value="1"/>
</dbReference>
<dbReference type="Gene3D" id="3.20.20.120">
    <property type="entry name" value="Enolase-like C-terminal domain"/>
    <property type="match status" value="1"/>
</dbReference>
<dbReference type="Gene3D" id="3.30.390.10">
    <property type="entry name" value="Enolase-like, N-terminal domain"/>
    <property type="match status" value="1"/>
</dbReference>
<dbReference type="HAMAP" id="MF_00318">
    <property type="entry name" value="Enolase"/>
    <property type="match status" value="1"/>
</dbReference>
<dbReference type="InterPro" id="IPR000941">
    <property type="entry name" value="Enolase"/>
</dbReference>
<dbReference type="InterPro" id="IPR036849">
    <property type="entry name" value="Enolase-like_C_sf"/>
</dbReference>
<dbReference type="InterPro" id="IPR029017">
    <property type="entry name" value="Enolase-like_N"/>
</dbReference>
<dbReference type="InterPro" id="IPR020810">
    <property type="entry name" value="Enolase_C"/>
</dbReference>
<dbReference type="InterPro" id="IPR020809">
    <property type="entry name" value="Enolase_CS"/>
</dbReference>
<dbReference type="InterPro" id="IPR020811">
    <property type="entry name" value="Enolase_N"/>
</dbReference>
<dbReference type="NCBIfam" id="TIGR01060">
    <property type="entry name" value="eno"/>
    <property type="match status" value="1"/>
</dbReference>
<dbReference type="PANTHER" id="PTHR11902">
    <property type="entry name" value="ENOLASE"/>
    <property type="match status" value="1"/>
</dbReference>
<dbReference type="PANTHER" id="PTHR11902:SF1">
    <property type="entry name" value="ENOLASE"/>
    <property type="match status" value="1"/>
</dbReference>
<dbReference type="Pfam" id="PF00113">
    <property type="entry name" value="Enolase_C"/>
    <property type="match status" value="1"/>
</dbReference>
<dbReference type="Pfam" id="PF03952">
    <property type="entry name" value="Enolase_N"/>
    <property type="match status" value="1"/>
</dbReference>
<dbReference type="PIRSF" id="PIRSF001400">
    <property type="entry name" value="Enolase"/>
    <property type="match status" value="1"/>
</dbReference>
<dbReference type="PRINTS" id="PR00148">
    <property type="entry name" value="ENOLASE"/>
</dbReference>
<dbReference type="SFLD" id="SFLDF00002">
    <property type="entry name" value="enolase"/>
    <property type="match status" value="1"/>
</dbReference>
<dbReference type="SFLD" id="SFLDG00178">
    <property type="entry name" value="enolase"/>
    <property type="match status" value="1"/>
</dbReference>
<dbReference type="SMART" id="SM01192">
    <property type="entry name" value="Enolase_C"/>
    <property type="match status" value="1"/>
</dbReference>
<dbReference type="SMART" id="SM01193">
    <property type="entry name" value="Enolase_N"/>
    <property type="match status" value="1"/>
</dbReference>
<dbReference type="SUPFAM" id="SSF51604">
    <property type="entry name" value="Enolase C-terminal domain-like"/>
    <property type="match status" value="1"/>
</dbReference>
<dbReference type="SUPFAM" id="SSF54826">
    <property type="entry name" value="Enolase N-terminal domain-like"/>
    <property type="match status" value="1"/>
</dbReference>
<dbReference type="PROSITE" id="PS00164">
    <property type="entry name" value="ENOLASE"/>
    <property type="match status" value="1"/>
</dbReference>
<organism evidence="15">
    <name type="scientific">Plasmodium falciparum (isolate NF54)</name>
    <dbReference type="NCBI Taxonomy" id="5843"/>
    <lineage>
        <taxon>Eukaryota</taxon>
        <taxon>Sar</taxon>
        <taxon>Alveolata</taxon>
        <taxon>Apicomplexa</taxon>
        <taxon>Aconoidasida</taxon>
        <taxon>Haemosporida</taxon>
        <taxon>Plasmodiidae</taxon>
        <taxon>Plasmodium</taxon>
        <taxon>Plasmodium (Laverania)</taxon>
    </lineage>
</organism>
<keyword id="KW-0007">Acetylation</keyword>
<keyword id="KW-1003">Cell membrane</keyword>
<keyword id="KW-0963">Cytoplasm</keyword>
<keyword id="KW-0206">Cytoskeleton</keyword>
<keyword id="KW-0324">Glycolysis</keyword>
<keyword id="KW-1017">Isopeptide bond</keyword>
<keyword id="KW-0456">Lyase</keyword>
<keyword id="KW-0460">Magnesium</keyword>
<keyword id="KW-0472">Membrane</keyword>
<keyword id="KW-0479">Metal-binding</keyword>
<keyword id="KW-0539">Nucleus</keyword>
<keyword id="KW-0597">Phosphoprotein</keyword>
<keyword id="KW-1185">Reference proteome</keyword>
<keyword id="KW-0832">Ubl conjugation</keyword>
<keyword id="KW-0926">Vacuole</keyword>
<gene>
    <name evidence="3" type="primary">ENO</name>
    <name evidence="14" type="ORF">CK202_4802</name>
    <name evidence="13" type="ORF">PFNF54_05495</name>
</gene>